<dbReference type="EMBL" id="AE004091">
    <property type="protein sequence ID" value="AAG06195.1"/>
    <property type="status" value="ALT_INIT"/>
    <property type="molecule type" value="Genomic_DNA"/>
</dbReference>
<dbReference type="PIR" id="E83293">
    <property type="entry name" value="E83293"/>
</dbReference>
<dbReference type="RefSeq" id="NP_251497.1">
    <property type="nucleotide sequence ID" value="NC_002516.2"/>
</dbReference>
<dbReference type="SMR" id="Q9I036"/>
<dbReference type="STRING" id="208964.PA2807"/>
<dbReference type="PaxDb" id="208964-PA2807"/>
<dbReference type="GeneID" id="880563"/>
<dbReference type="KEGG" id="pae:PA2807"/>
<dbReference type="PATRIC" id="fig|208964.12.peg.2945"/>
<dbReference type="PseudoCAP" id="PA2807"/>
<dbReference type="HOGENOM" id="CLU_102172_2_0_6"/>
<dbReference type="InParanoid" id="Q9I036"/>
<dbReference type="OrthoDB" id="9816061at2"/>
<dbReference type="PhylomeDB" id="Q9I036"/>
<dbReference type="BioCyc" id="PAER208964:G1FZ6-2854-MONOMER"/>
<dbReference type="Proteomes" id="UP000002438">
    <property type="component" value="Chromosome"/>
</dbReference>
<dbReference type="GO" id="GO:0042597">
    <property type="term" value="C:periplasmic space"/>
    <property type="evidence" value="ECO:0007669"/>
    <property type="project" value="UniProtKB-SubCell"/>
</dbReference>
<dbReference type="GO" id="GO:0005886">
    <property type="term" value="C:plasma membrane"/>
    <property type="evidence" value="ECO:0000318"/>
    <property type="project" value="GO_Central"/>
</dbReference>
<dbReference type="GO" id="GO:0005507">
    <property type="term" value="F:copper ion binding"/>
    <property type="evidence" value="ECO:0007669"/>
    <property type="project" value="InterPro"/>
</dbReference>
<dbReference type="GO" id="GO:0009055">
    <property type="term" value="F:electron transfer activity"/>
    <property type="evidence" value="ECO:0007669"/>
    <property type="project" value="InterPro"/>
</dbReference>
<dbReference type="CDD" id="cd04211">
    <property type="entry name" value="Cupredoxin_like_2"/>
    <property type="match status" value="1"/>
</dbReference>
<dbReference type="FunFam" id="2.60.40.420:FF:000191">
    <property type="entry name" value="Uncharacterized protein"/>
    <property type="match status" value="1"/>
</dbReference>
<dbReference type="Gene3D" id="2.60.40.420">
    <property type="entry name" value="Cupredoxins - blue copper proteins"/>
    <property type="match status" value="1"/>
</dbReference>
<dbReference type="InterPro" id="IPR000923">
    <property type="entry name" value="BlueCu_1"/>
</dbReference>
<dbReference type="InterPro" id="IPR050845">
    <property type="entry name" value="Cu-binding_ET"/>
</dbReference>
<dbReference type="InterPro" id="IPR008972">
    <property type="entry name" value="Cupredoxin"/>
</dbReference>
<dbReference type="PANTHER" id="PTHR38439">
    <property type="entry name" value="AURACYANIN-B"/>
    <property type="match status" value="1"/>
</dbReference>
<dbReference type="PANTHER" id="PTHR38439:SF3">
    <property type="entry name" value="COPPER-RESISTANT CUPROPROTEIN COPI"/>
    <property type="match status" value="1"/>
</dbReference>
<dbReference type="Pfam" id="PF00127">
    <property type="entry name" value="Copper-bind"/>
    <property type="match status" value="1"/>
</dbReference>
<dbReference type="SUPFAM" id="SSF49503">
    <property type="entry name" value="Cupredoxins"/>
    <property type="match status" value="1"/>
</dbReference>
<comment type="function">
    <text evidence="5">Involved in copper tolerance.</text>
</comment>
<comment type="subcellular location">
    <subcellularLocation>
        <location evidence="1">Periplasm</location>
    </subcellularLocation>
</comment>
<comment type="induction">
    <text evidence="4">Induced by copper stress.</text>
</comment>
<comment type="disruption phenotype">
    <text evidence="4">Disruption of the gene leads to a copper-sensitive phenotype.</text>
</comment>
<comment type="miscellaneous">
    <text evidence="5">Restores the copper-resistant phenotype in the R.gelatinosus deletion mutant under anaerobiosis.</text>
</comment>
<comment type="similarity">
    <text evidence="7">Belongs to the CopI family.</text>
</comment>
<comment type="sequence caution" evidence="7">
    <conflict type="erroneous initiation">
        <sequence resource="EMBL-CDS" id="AAG06195"/>
    </conflict>
    <text>Extended N-terminus.</text>
</comment>
<reference key="1">
    <citation type="journal article" date="2000" name="Nature">
        <title>Complete genome sequence of Pseudomonas aeruginosa PAO1, an opportunistic pathogen.</title>
        <authorList>
            <person name="Stover C.K."/>
            <person name="Pham X.-Q.T."/>
            <person name="Erwin A.L."/>
            <person name="Mizoguchi S.D."/>
            <person name="Warrener P."/>
            <person name="Hickey M.J."/>
            <person name="Brinkman F.S.L."/>
            <person name="Hufnagle W.O."/>
            <person name="Kowalik D.J."/>
            <person name="Lagrou M."/>
            <person name="Garber R.L."/>
            <person name="Goltry L."/>
            <person name="Tolentino E."/>
            <person name="Westbrock-Wadman S."/>
            <person name="Yuan Y."/>
            <person name="Brody L.L."/>
            <person name="Coulter S.N."/>
            <person name="Folger K.R."/>
            <person name="Kas A."/>
            <person name="Larbig K."/>
            <person name="Lim R.M."/>
            <person name="Smith K.A."/>
            <person name="Spencer D.H."/>
            <person name="Wong G.K.-S."/>
            <person name="Wu Z."/>
            <person name="Paulsen I.T."/>
            <person name="Reizer J."/>
            <person name="Saier M.H. Jr."/>
            <person name="Hancock R.E.W."/>
            <person name="Lory S."/>
            <person name="Olson M.V."/>
        </authorList>
    </citation>
    <scope>NUCLEOTIDE SEQUENCE [LARGE SCALE GENOMIC DNA]</scope>
    <source>
        <strain>ATCC 15692 / DSM 22644 / CIP 104116 / JCM 14847 / LMG 12228 / 1C / PRS 101 / PAO1</strain>
    </source>
</reference>
<reference key="2">
    <citation type="journal article" date="2006" name="J. Bacteriol.">
        <title>Survival and growth in the presence of elevated copper: transcriptional profiling of copper-stressed Pseudomonas aeruginosa.</title>
        <authorList>
            <person name="Teitzel G.M."/>
            <person name="Geddie A."/>
            <person name="De Long S.K."/>
            <person name="Kirisits M.J."/>
            <person name="Whiteley M."/>
            <person name="Parsek M.R."/>
        </authorList>
    </citation>
    <scope>INDUCTION</scope>
    <scope>DISRUPTION PHENOTYPE</scope>
    <source>
        <strain>ATCC 15692 / DSM 22644 / CIP 104116 / JCM 14847 / LMG 12228 / 1C / PRS 101 / PAO1</strain>
    </source>
</reference>
<reference key="3">
    <citation type="journal article" date="2021" name="Metallomics">
        <title>A periplasmic cupredoxin with a green CuT1.5 center is involved in bacterial copper tolerance.</title>
        <authorList>
            <person name="Durand A."/>
            <person name="Fouesnard M."/>
            <person name="Bourbon M.L."/>
            <person name="Steunou A.S."/>
            <person name="Lojou E."/>
            <person name="Dorlet P."/>
            <person name="Ouchane S."/>
        </authorList>
    </citation>
    <scope>FUNCTION IN COPPER TOLERANCE</scope>
    <source>
        <strain>ATCC 15692 / DSM 22644 / CIP 104116 / JCM 14847 / LMG 12228 / 1C / PRS 101 / PAO1</strain>
    </source>
</reference>
<accession>Q9I036</accession>
<keyword id="KW-0186">Copper</keyword>
<keyword id="KW-0479">Metal-binding</keyword>
<keyword id="KW-0574">Periplasm</keyword>
<keyword id="KW-1185">Reference proteome</keyword>
<keyword id="KW-0732">Signal</keyword>
<gene>
    <name evidence="6" type="primary">copI</name>
    <name evidence="8" type="ordered locus">PA2807</name>
</gene>
<organism>
    <name type="scientific">Pseudomonas aeruginosa (strain ATCC 15692 / DSM 22644 / CIP 104116 / JCM 14847 / LMG 12228 / 1C / PRS 101 / PAO1)</name>
    <dbReference type="NCBI Taxonomy" id="208964"/>
    <lineage>
        <taxon>Bacteria</taxon>
        <taxon>Pseudomonadati</taxon>
        <taxon>Pseudomonadota</taxon>
        <taxon>Gammaproteobacteria</taxon>
        <taxon>Pseudomonadales</taxon>
        <taxon>Pseudomonadaceae</taxon>
        <taxon>Pseudomonas</taxon>
    </lineage>
</organism>
<proteinExistence type="evidence at protein level"/>
<protein>
    <recommendedName>
        <fullName evidence="6">Copper-resistant cuproprotein CopI</fullName>
    </recommendedName>
</protein>
<evidence type="ECO:0000250" key="1">
    <source>
        <dbReference type="UniProtKB" id="Q9KMQ9"/>
    </source>
</evidence>
<evidence type="ECO:0000250" key="2">
    <source>
        <dbReference type="UniProtKB" id="W8FLH9"/>
    </source>
</evidence>
<evidence type="ECO:0000255" key="3"/>
<evidence type="ECO:0000269" key="4">
    <source>
    </source>
</evidence>
<evidence type="ECO:0000269" key="5">
    <source>
    </source>
</evidence>
<evidence type="ECO:0000303" key="6">
    <source>
    </source>
</evidence>
<evidence type="ECO:0000305" key="7"/>
<evidence type="ECO:0000312" key="8">
    <source>
        <dbReference type="EMBL" id="AAG06195.1"/>
    </source>
</evidence>
<sequence>MFPRRLLPASLIVLGVLFGASAQASPAHGQAFGKPAQAAQASRSIEVVLGDMYFKPRAIEVKAGETVRFVLKNEGKLLHEFNLGDAAMHAEHQKEMLEMQQSGMLTPTGMASMDHSQMGHGMADMDHGRMMKHDDPNSVLVEPGKSAELTWTFTKATRLEFACNIPGHYQAGMVGQLTVQP</sequence>
<feature type="signal peptide" evidence="3">
    <location>
        <begin position="1"/>
        <end position="24"/>
    </location>
</feature>
<feature type="chain" id="PRO_0000458055" description="Copper-resistant cuproprotein CopI">
    <location>
        <begin position="25"/>
        <end position="181"/>
    </location>
</feature>
<feature type="binding site" evidence="2">
    <location>
        <position position="79"/>
    </location>
    <ligand>
        <name>Cu(2+)</name>
        <dbReference type="ChEBI" id="CHEBI:29036"/>
    </ligand>
</feature>
<feature type="binding site" evidence="2">
    <location>
        <position position="163"/>
    </location>
    <ligand>
        <name>Cu(2+)</name>
        <dbReference type="ChEBI" id="CHEBI:29036"/>
    </ligand>
</feature>
<feature type="binding site" evidence="2">
    <location>
        <position position="168"/>
    </location>
    <ligand>
        <name>Cu(2+)</name>
        <dbReference type="ChEBI" id="CHEBI:29036"/>
    </ligand>
</feature>
<feature type="binding site" evidence="2">
    <location>
        <position position="173"/>
    </location>
    <ligand>
        <name>Cu(2+)</name>
        <dbReference type="ChEBI" id="CHEBI:29036"/>
    </ligand>
</feature>
<name>COPI_PSEAE</name>